<reference key="1">
    <citation type="journal article" date="1998" name="J. Mol. Biol.">
        <title>Genome structure of mycobacteriophage D29: implications for phage evolution.</title>
        <authorList>
            <person name="Ford M.E."/>
            <person name="Sarkis G.J."/>
            <person name="Belanger A.E."/>
            <person name="Hendrix R.W."/>
            <person name="Hatfull G.F."/>
        </authorList>
    </citation>
    <scope>NUCLEOTIDE SEQUENCE [LARGE SCALE GENOMIC DNA]</scope>
</reference>
<organism>
    <name type="scientific">Mycobacterium phage D29</name>
    <name type="common">Mycobacteriophage D29</name>
    <dbReference type="NCBI Taxonomy" id="28369"/>
    <lineage>
        <taxon>Viruses</taxon>
        <taxon>Duplodnaviria</taxon>
        <taxon>Heunggongvirae</taxon>
        <taxon>Uroviricota</taxon>
        <taxon>Caudoviricetes</taxon>
        <taxon>Fromanvirus</taxon>
    </lineage>
</organism>
<name>VG54_BPMD2</name>
<feature type="chain" id="PRO_0000164782" description="Gene 54 protein">
    <location>
        <begin position="1"/>
        <end position="255"/>
    </location>
</feature>
<proteinExistence type="predicted"/>
<protein>
    <recommendedName>
        <fullName>Gene 54 protein</fullName>
    </recommendedName>
    <alternativeName>
        <fullName>Gp54</fullName>
    </alternativeName>
</protein>
<organismHost>
    <name type="scientific">Mycobacterium</name>
    <dbReference type="NCBI Taxonomy" id="1763"/>
</organismHost>
<accession>O64245</accession>
<keyword id="KW-1185">Reference proteome</keyword>
<gene>
    <name type="primary">54</name>
</gene>
<sequence length="255" mass="28546">MSKRIVVISDTQIPFDDRKQLKAVVGFIGDTQPDEVVHIGDLMDYPSPSRWTKGSSEEFAQRIKPDSEQAKTRFLAPLRAVYDGPVGVHEGNHDRRPFDYLHKFAPALVEYADQFKFENLLDFDGFGVTVLPEFYKVAPGWISTHGHRGGVRVTQKSADTAYNAMQRFGTSVIIGHTHRQGIKPHTWGYGGHQKVLWSMEVGNLMNMKLAQYLKGATANWQSGFGLLTVDGNHVKPELVPIVGGRFSVDGHVWEV</sequence>
<dbReference type="EMBL" id="AF022214">
    <property type="protein sequence ID" value="AAC18495.1"/>
    <property type="molecule type" value="Genomic_DNA"/>
</dbReference>
<dbReference type="PIR" id="D72806">
    <property type="entry name" value="D72806"/>
</dbReference>
<dbReference type="RefSeq" id="NP_046870.1">
    <property type="nucleotide sequence ID" value="NC_001900.1"/>
</dbReference>
<dbReference type="GeneID" id="1261599"/>
<dbReference type="KEGG" id="vg:1261599"/>
<dbReference type="OrthoDB" id="5553at10239"/>
<dbReference type="Proteomes" id="UP000002131">
    <property type="component" value="Segment"/>
</dbReference>
<dbReference type="GO" id="GO:0016787">
    <property type="term" value="F:hydrolase activity"/>
    <property type="evidence" value="ECO:0007669"/>
    <property type="project" value="InterPro"/>
</dbReference>
<dbReference type="Gene3D" id="3.60.21.10">
    <property type="match status" value="1"/>
</dbReference>
<dbReference type="InterPro" id="IPR004843">
    <property type="entry name" value="Calcineurin-like_PHP_ApaH"/>
</dbReference>
<dbReference type="InterPro" id="IPR029052">
    <property type="entry name" value="Metallo-depent_PP-like"/>
</dbReference>
<dbReference type="Pfam" id="PF00149">
    <property type="entry name" value="Metallophos"/>
    <property type="match status" value="1"/>
</dbReference>
<dbReference type="SUPFAM" id="SSF56300">
    <property type="entry name" value="Metallo-dependent phosphatases"/>
    <property type="match status" value="1"/>
</dbReference>